<sequence length="263" mass="29865">MPEGPEIRRAADNLEAAIKGKPLTDVWFAFAQLKPYESQLTGQLVTRIETRGKALLTHFSNGLTLYSHNQLYGVWRVIDTGEIPQTTRILRVRLQTADKIILLYSASDIEMLTAEQLMTHPFLQRVGPDVLDARLTPEEVKARLLSPRFRNRQFSGLLLDQSFLAGLGNYLRVEILWQVGLTGQHKAKDLNEAQLNALSHALLDIPRLSYTTRGQADENKHHGALFRFKVFHRDGEACERCGGIIEKTTLSSRPFYWCAHCQK</sequence>
<comment type="function">
    <text evidence="1">Involved in base excision repair of DNA damaged by oxidation or by mutagenic agents. Acts as a DNA glycosylase that recognizes and removes damaged bases. Has a preference for oxidized pyrimidines, such as thymine glycol, 5,6-dihydrouracil and 5,6-dihydrothymine. Has AP (apurinic/apyrimidinic) lyase activity and introduces nicks in the DNA strand. Cleaves the DNA backbone by beta-delta elimination to generate a single-strand break at the site of the removed base with both 3'- and 5'-phosphates.</text>
</comment>
<comment type="catalytic activity">
    <reaction evidence="1">
        <text>2'-deoxyribonucleotide-(2'-deoxyribose 5'-phosphate)-2'-deoxyribonucleotide-DNA = a 3'-end 2'-deoxyribonucleotide-(2,3-dehydro-2,3-deoxyribose 5'-phosphate)-DNA + a 5'-end 5'-phospho-2'-deoxyribonucleoside-DNA + H(+)</text>
        <dbReference type="Rhea" id="RHEA:66592"/>
        <dbReference type="Rhea" id="RHEA-COMP:13180"/>
        <dbReference type="Rhea" id="RHEA-COMP:16897"/>
        <dbReference type="Rhea" id="RHEA-COMP:17067"/>
        <dbReference type="ChEBI" id="CHEBI:15378"/>
        <dbReference type="ChEBI" id="CHEBI:136412"/>
        <dbReference type="ChEBI" id="CHEBI:157695"/>
        <dbReference type="ChEBI" id="CHEBI:167181"/>
        <dbReference type="EC" id="4.2.99.18"/>
    </reaction>
</comment>
<comment type="cofactor">
    <cofactor evidence="1">
        <name>Zn(2+)</name>
        <dbReference type="ChEBI" id="CHEBI:29105"/>
    </cofactor>
    <text evidence="1">Binds 1 zinc ion per subunit.</text>
</comment>
<comment type="similarity">
    <text evidence="1">Belongs to the FPG family.</text>
</comment>
<name>END8_SALTI</name>
<evidence type="ECO:0000255" key="1">
    <source>
        <dbReference type="HAMAP-Rule" id="MF_01253"/>
    </source>
</evidence>
<feature type="initiator methionine" description="Removed" evidence="1">
    <location>
        <position position="1"/>
    </location>
</feature>
<feature type="chain" id="PRO_0000170897" description="Endonuclease 8">
    <location>
        <begin position="2"/>
        <end position="263"/>
    </location>
</feature>
<feature type="zinc finger region" description="FPG-type" evidence="1">
    <location>
        <begin position="229"/>
        <end position="263"/>
    </location>
</feature>
<feature type="active site" description="Schiff-base intermediate with DNA" evidence="1">
    <location>
        <position position="2"/>
    </location>
</feature>
<feature type="active site" description="Proton donor" evidence="1">
    <location>
        <position position="3"/>
    </location>
</feature>
<feature type="active site" description="Proton donor; for beta-elimination activity" evidence="1">
    <location>
        <position position="53"/>
    </location>
</feature>
<feature type="active site" description="Proton donor; for delta-elimination activity" evidence="1">
    <location>
        <position position="253"/>
    </location>
</feature>
<feature type="binding site" evidence="1">
    <location>
        <position position="70"/>
    </location>
    <ligand>
        <name>DNA</name>
        <dbReference type="ChEBI" id="CHEBI:16991"/>
    </ligand>
</feature>
<feature type="binding site" evidence="1">
    <location>
        <position position="125"/>
    </location>
    <ligand>
        <name>DNA</name>
        <dbReference type="ChEBI" id="CHEBI:16991"/>
    </ligand>
</feature>
<feature type="binding site" evidence="1">
    <location>
        <position position="169"/>
    </location>
    <ligand>
        <name>DNA</name>
        <dbReference type="ChEBI" id="CHEBI:16991"/>
    </ligand>
</feature>
<dbReference type="EC" id="3.2.2.-" evidence="1"/>
<dbReference type="EC" id="4.2.99.18" evidence="1"/>
<dbReference type="EMBL" id="AL513382">
    <property type="protein sequence ID" value="CAD05190.1"/>
    <property type="molecule type" value="Genomic_DNA"/>
</dbReference>
<dbReference type="EMBL" id="AE014613">
    <property type="protein sequence ID" value="AAO69762.1"/>
    <property type="molecule type" value="Genomic_DNA"/>
</dbReference>
<dbReference type="RefSeq" id="NP_455284.1">
    <property type="nucleotide sequence ID" value="NC_003198.1"/>
</dbReference>
<dbReference type="RefSeq" id="WP_001113965.1">
    <property type="nucleotide sequence ID" value="NZ_WSUR01000015.1"/>
</dbReference>
<dbReference type="SMR" id="Q8Z8D2"/>
<dbReference type="STRING" id="220341.gene:17584777"/>
<dbReference type="KEGG" id="stt:t2148"/>
<dbReference type="KEGG" id="sty:STY0771"/>
<dbReference type="PATRIC" id="fig|220341.7.peg.776"/>
<dbReference type="eggNOG" id="COG0266">
    <property type="taxonomic scope" value="Bacteria"/>
</dbReference>
<dbReference type="HOGENOM" id="CLU_038423_2_2_6"/>
<dbReference type="OMA" id="YKSELCF"/>
<dbReference type="OrthoDB" id="5657047at2"/>
<dbReference type="Proteomes" id="UP000000541">
    <property type="component" value="Chromosome"/>
</dbReference>
<dbReference type="Proteomes" id="UP000002670">
    <property type="component" value="Chromosome"/>
</dbReference>
<dbReference type="GO" id="GO:0140078">
    <property type="term" value="F:class I DNA-(apurinic or apyrimidinic site) endonuclease activity"/>
    <property type="evidence" value="ECO:0007669"/>
    <property type="project" value="UniProtKB-EC"/>
</dbReference>
<dbReference type="GO" id="GO:0003684">
    <property type="term" value="F:damaged DNA binding"/>
    <property type="evidence" value="ECO:0007669"/>
    <property type="project" value="InterPro"/>
</dbReference>
<dbReference type="GO" id="GO:0000703">
    <property type="term" value="F:oxidized pyrimidine nucleobase lesion DNA N-glycosylase activity"/>
    <property type="evidence" value="ECO:0007669"/>
    <property type="project" value="UniProtKB-UniRule"/>
</dbReference>
<dbReference type="GO" id="GO:0008270">
    <property type="term" value="F:zinc ion binding"/>
    <property type="evidence" value="ECO:0007669"/>
    <property type="project" value="UniProtKB-UniRule"/>
</dbReference>
<dbReference type="GO" id="GO:0006284">
    <property type="term" value="P:base-excision repair"/>
    <property type="evidence" value="ECO:0007669"/>
    <property type="project" value="InterPro"/>
</dbReference>
<dbReference type="CDD" id="cd08965">
    <property type="entry name" value="EcNei-like_N"/>
    <property type="match status" value="1"/>
</dbReference>
<dbReference type="FunFam" id="1.10.8.50:FF:000005">
    <property type="entry name" value="Endonuclease 8"/>
    <property type="match status" value="1"/>
</dbReference>
<dbReference type="FunFam" id="3.20.190.10:FF:000002">
    <property type="entry name" value="Endonuclease 8"/>
    <property type="match status" value="1"/>
</dbReference>
<dbReference type="Gene3D" id="1.10.8.50">
    <property type="match status" value="1"/>
</dbReference>
<dbReference type="Gene3D" id="3.20.190.10">
    <property type="entry name" value="MutM-like, N-terminal"/>
    <property type="match status" value="1"/>
</dbReference>
<dbReference type="HAMAP" id="MF_01253">
    <property type="entry name" value="Endonuclease_8"/>
    <property type="match status" value="1"/>
</dbReference>
<dbReference type="InterPro" id="IPR015886">
    <property type="entry name" value="DNA_glyclase/AP_lyase_DNA-bd"/>
</dbReference>
<dbReference type="InterPro" id="IPR015887">
    <property type="entry name" value="DNA_glyclase_Znf_dom_DNA_BS"/>
</dbReference>
<dbReference type="InterPro" id="IPR044091">
    <property type="entry name" value="EcNei-like_N"/>
</dbReference>
<dbReference type="InterPro" id="IPR023713">
    <property type="entry name" value="Endonuclease-VIII"/>
</dbReference>
<dbReference type="InterPro" id="IPR012319">
    <property type="entry name" value="FPG_cat"/>
</dbReference>
<dbReference type="InterPro" id="IPR035937">
    <property type="entry name" value="MutM-like_N-ter"/>
</dbReference>
<dbReference type="InterPro" id="IPR010979">
    <property type="entry name" value="Ribosomal_uS13-like_H2TH"/>
</dbReference>
<dbReference type="InterPro" id="IPR000214">
    <property type="entry name" value="Znf_DNA_glyclase/AP_lyase"/>
</dbReference>
<dbReference type="InterPro" id="IPR010663">
    <property type="entry name" value="Znf_FPG/IleRS"/>
</dbReference>
<dbReference type="NCBIfam" id="NF007763">
    <property type="entry name" value="PRK10445.1"/>
    <property type="match status" value="1"/>
</dbReference>
<dbReference type="PANTHER" id="PTHR42697">
    <property type="entry name" value="ENDONUCLEASE 8"/>
    <property type="match status" value="1"/>
</dbReference>
<dbReference type="PANTHER" id="PTHR42697:SF1">
    <property type="entry name" value="ENDONUCLEASE 8"/>
    <property type="match status" value="1"/>
</dbReference>
<dbReference type="Pfam" id="PF01149">
    <property type="entry name" value="Fapy_DNA_glyco"/>
    <property type="match status" value="1"/>
</dbReference>
<dbReference type="Pfam" id="PF06831">
    <property type="entry name" value="H2TH"/>
    <property type="match status" value="1"/>
</dbReference>
<dbReference type="Pfam" id="PF06827">
    <property type="entry name" value="zf-FPG_IleRS"/>
    <property type="match status" value="1"/>
</dbReference>
<dbReference type="SMART" id="SM00898">
    <property type="entry name" value="Fapy_DNA_glyco"/>
    <property type="match status" value="1"/>
</dbReference>
<dbReference type="SMART" id="SM01232">
    <property type="entry name" value="H2TH"/>
    <property type="match status" value="1"/>
</dbReference>
<dbReference type="SUPFAM" id="SSF57716">
    <property type="entry name" value="Glucocorticoid receptor-like (DNA-binding domain)"/>
    <property type="match status" value="1"/>
</dbReference>
<dbReference type="SUPFAM" id="SSF81624">
    <property type="entry name" value="N-terminal domain of MutM-like DNA repair proteins"/>
    <property type="match status" value="1"/>
</dbReference>
<dbReference type="SUPFAM" id="SSF46946">
    <property type="entry name" value="S13-like H2TH domain"/>
    <property type="match status" value="1"/>
</dbReference>
<dbReference type="PROSITE" id="PS51068">
    <property type="entry name" value="FPG_CAT"/>
    <property type="match status" value="1"/>
</dbReference>
<dbReference type="PROSITE" id="PS01242">
    <property type="entry name" value="ZF_FPG_1"/>
    <property type="match status" value="1"/>
</dbReference>
<dbReference type="PROSITE" id="PS51066">
    <property type="entry name" value="ZF_FPG_2"/>
    <property type="match status" value="1"/>
</dbReference>
<protein>
    <recommendedName>
        <fullName evidence="1">Endonuclease 8</fullName>
    </recommendedName>
    <alternativeName>
        <fullName evidence="1">DNA glycosylase/AP lyase Nei</fullName>
        <ecNumber evidence="1">3.2.2.-</ecNumber>
        <ecNumber evidence="1">4.2.99.18</ecNumber>
    </alternativeName>
    <alternativeName>
        <fullName evidence="1">DNA-(apurinic or apyrimidinic site) lyase Nei</fullName>
    </alternativeName>
    <alternativeName>
        <fullName evidence="1">Endonuclease VIII</fullName>
    </alternativeName>
</protein>
<gene>
    <name evidence="1" type="primary">nei</name>
    <name type="ordered locus">STY0771</name>
    <name type="ordered locus">t2148</name>
</gene>
<proteinExistence type="inferred from homology"/>
<keyword id="KW-0227">DNA damage</keyword>
<keyword id="KW-0234">DNA repair</keyword>
<keyword id="KW-0238">DNA-binding</keyword>
<keyword id="KW-0326">Glycosidase</keyword>
<keyword id="KW-0378">Hydrolase</keyword>
<keyword id="KW-0456">Lyase</keyword>
<keyword id="KW-0479">Metal-binding</keyword>
<keyword id="KW-0511">Multifunctional enzyme</keyword>
<keyword id="KW-0862">Zinc</keyword>
<keyword id="KW-0863">Zinc-finger</keyword>
<organism>
    <name type="scientific">Salmonella typhi</name>
    <dbReference type="NCBI Taxonomy" id="90370"/>
    <lineage>
        <taxon>Bacteria</taxon>
        <taxon>Pseudomonadati</taxon>
        <taxon>Pseudomonadota</taxon>
        <taxon>Gammaproteobacteria</taxon>
        <taxon>Enterobacterales</taxon>
        <taxon>Enterobacteriaceae</taxon>
        <taxon>Salmonella</taxon>
    </lineage>
</organism>
<accession>Q8Z8D2</accession>
<reference key="1">
    <citation type="journal article" date="2001" name="Nature">
        <title>Complete genome sequence of a multiple drug resistant Salmonella enterica serovar Typhi CT18.</title>
        <authorList>
            <person name="Parkhill J."/>
            <person name="Dougan G."/>
            <person name="James K.D."/>
            <person name="Thomson N.R."/>
            <person name="Pickard D."/>
            <person name="Wain J."/>
            <person name="Churcher C.M."/>
            <person name="Mungall K.L."/>
            <person name="Bentley S.D."/>
            <person name="Holden M.T.G."/>
            <person name="Sebaihia M."/>
            <person name="Baker S."/>
            <person name="Basham D."/>
            <person name="Brooks K."/>
            <person name="Chillingworth T."/>
            <person name="Connerton P."/>
            <person name="Cronin A."/>
            <person name="Davis P."/>
            <person name="Davies R.M."/>
            <person name="Dowd L."/>
            <person name="White N."/>
            <person name="Farrar J."/>
            <person name="Feltwell T."/>
            <person name="Hamlin N."/>
            <person name="Haque A."/>
            <person name="Hien T.T."/>
            <person name="Holroyd S."/>
            <person name="Jagels K."/>
            <person name="Krogh A."/>
            <person name="Larsen T.S."/>
            <person name="Leather S."/>
            <person name="Moule S."/>
            <person name="O'Gaora P."/>
            <person name="Parry C."/>
            <person name="Quail M.A."/>
            <person name="Rutherford K.M."/>
            <person name="Simmonds M."/>
            <person name="Skelton J."/>
            <person name="Stevens K."/>
            <person name="Whitehead S."/>
            <person name="Barrell B.G."/>
        </authorList>
    </citation>
    <scope>NUCLEOTIDE SEQUENCE [LARGE SCALE GENOMIC DNA]</scope>
    <source>
        <strain>CT18</strain>
    </source>
</reference>
<reference key="2">
    <citation type="journal article" date="2003" name="J. Bacteriol.">
        <title>Comparative genomics of Salmonella enterica serovar Typhi strains Ty2 and CT18.</title>
        <authorList>
            <person name="Deng W."/>
            <person name="Liou S.-R."/>
            <person name="Plunkett G. III"/>
            <person name="Mayhew G.F."/>
            <person name="Rose D.J."/>
            <person name="Burland V."/>
            <person name="Kodoyianni V."/>
            <person name="Schwartz D.C."/>
            <person name="Blattner F.R."/>
        </authorList>
    </citation>
    <scope>NUCLEOTIDE SEQUENCE [LARGE SCALE GENOMIC DNA]</scope>
    <source>
        <strain>ATCC 700931 / Ty2</strain>
    </source>
</reference>